<reference key="1">
    <citation type="journal article" date="2008" name="PLoS ONE">
        <title>Genome sequence of the saprophyte Leptospira biflexa provides insights into the evolution of Leptospira and the pathogenesis of leptospirosis.</title>
        <authorList>
            <person name="Picardeau M."/>
            <person name="Bulach D.M."/>
            <person name="Bouchier C."/>
            <person name="Zuerner R.L."/>
            <person name="Zidane N."/>
            <person name="Wilson P.J."/>
            <person name="Creno S."/>
            <person name="Kuczek E.S."/>
            <person name="Bommezzadri S."/>
            <person name="Davis J.C."/>
            <person name="McGrath A."/>
            <person name="Johnson M.J."/>
            <person name="Boursaux-Eude C."/>
            <person name="Seemann T."/>
            <person name="Rouy Z."/>
            <person name="Coppel R.L."/>
            <person name="Rood J.I."/>
            <person name="Lajus A."/>
            <person name="Davies J.K."/>
            <person name="Medigue C."/>
            <person name="Adler B."/>
        </authorList>
    </citation>
    <scope>NUCLEOTIDE SEQUENCE [LARGE SCALE GENOMIC DNA]</scope>
    <source>
        <strain>Patoc 1 / Ames</strain>
    </source>
</reference>
<evidence type="ECO:0000255" key="1">
    <source>
        <dbReference type="HAMAP-Rule" id="MF_00015"/>
    </source>
</evidence>
<protein>
    <recommendedName>
        <fullName evidence="1">LexA repressor</fullName>
        <ecNumber evidence="1">3.4.21.88</ecNumber>
    </recommendedName>
</protein>
<gene>
    <name evidence="1" type="primary">lexA</name>
    <name type="ordered locus">LBF_1262</name>
</gene>
<feature type="chain" id="PRO_1000089574" description="LexA repressor">
    <location>
        <begin position="1"/>
        <end position="202"/>
    </location>
</feature>
<feature type="DNA-binding region" description="H-T-H motif" evidence="1">
    <location>
        <begin position="28"/>
        <end position="47"/>
    </location>
</feature>
<feature type="active site" description="For autocatalytic cleavage activity" evidence="1">
    <location>
        <position position="126"/>
    </location>
</feature>
<feature type="active site" description="For autocatalytic cleavage activity" evidence="1">
    <location>
        <position position="163"/>
    </location>
</feature>
<feature type="site" description="Cleavage; by autolysis" evidence="1">
    <location>
        <begin position="91"/>
        <end position="92"/>
    </location>
</feature>
<sequence length="202" mass="22267">MKDLTEKQEFVLQYISDTVREKGFPPTIREIGDQFGITAKGAYDHLKAIEKKGYIRTSKNQSRAIELLKGNADEALLVRASGIPLLGQVAAGAPILAEENIEEYIAVPDDLATKPGTFALRVKGDSMVEAGISDGDIAIIQKKDTARNGEIVVALIENEATLKVFFKEPDMIRLEPRNAKLKPIRTKKATIIGKLIGLYRIY</sequence>
<dbReference type="EC" id="3.4.21.88" evidence="1"/>
<dbReference type="EMBL" id="CP000777">
    <property type="protein sequence ID" value="ABZ93784.1"/>
    <property type="molecule type" value="Genomic_DNA"/>
</dbReference>
<dbReference type="RefSeq" id="WP_012388307.1">
    <property type="nucleotide sequence ID" value="NC_010842.1"/>
</dbReference>
<dbReference type="SMR" id="B0SFV4"/>
<dbReference type="MEROPS" id="S24.001"/>
<dbReference type="KEGG" id="lbf:LBF_1262"/>
<dbReference type="HOGENOM" id="CLU_066192_45_1_12"/>
<dbReference type="GO" id="GO:0003677">
    <property type="term" value="F:DNA binding"/>
    <property type="evidence" value="ECO:0007669"/>
    <property type="project" value="UniProtKB-UniRule"/>
</dbReference>
<dbReference type="GO" id="GO:0004252">
    <property type="term" value="F:serine-type endopeptidase activity"/>
    <property type="evidence" value="ECO:0007669"/>
    <property type="project" value="UniProtKB-UniRule"/>
</dbReference>
<dbReference type="GO" id="GO:0006281">
    <property type="term" value="P:DNA repair"/>
    <property type="evidence" value="ECO:0007669"/>
    <property type="project" value="UniProtKB-UniRule"/>
</dbReference>
<dbReference type="GO" id="GO:0006260">
    <property type="term" value="P:DNA replication"/>
    <property type="evidence" value="ECO:0007669"/>
    <property type="project" value="UniProtKB-UniRule"/>
</dbReference>
<dbReference type="GO" id="GO:0045892">
    <property type="term" value="P:negative regulation of DNA-templated transcription"/>
    <property type="evidence" value="ECO:0007669"/>
    <property type="project" value="UniProtKB-UniRule"/>
</dbReference>
<dbReference type="GO" id="GO:0006508">
    <property type="term" value="P:proteolysis"/>
    <property type="evidence" value="ECO:0007669"/>
    <property type="project" value="InterPro"/>
</dbReference>
<dbReference type="GO" id="GO:0009432">
    <property type="term" value="P:SOS response"/>
    <property type="evidence" value="ECO:0007669"/>
    <property type="project" value="UniProtKB-UniRule"/>
</dbReference>
<dbReference type="CDD" id="cd06529">
    <property type="entry name" value="S24_LexA-like"/>
    <property type="match status" value="1"/>
</dbReference>
<dbReference type="FunFam" id="1.10.10.10:FF:000009">
    <property type="entry name" value="LexA repressor"/>
    <property type="match status" value="1"/>
</dbReference>
<dbReference type="FunFam" id="2.10.109.10:FF:000001">
    <property type="entry name" value="LexA repressor"/>
    <property type="match status" value="1"/>
</dbReference>
<dbReference type="Gene3D" id="2.10.109.10">
    <property type="entry name" value="Umud Fragment, subunit A"/>
    <property type="match status" value="1"/>
</dbReference>
<dbReference type="Gene3D" id="1.10.10.10">
    <property type="entry name" value="Winged helix-like DNA-binding domain superfamily/Winged helix DNA-binding domain"/>
    <property type="match status" value="1"/>
</dbReference>
<dbReference type="HAMAP" id="MF_00015">
    <property type="entry name" value="LexA"/>
    <property type="match status" value="1"/>
</dbReference>
<dbReference type="InterPro" id="IPR006200">
    <property type="entry name" value="LexA"/>
</dbReference>
<dbReference type="InterPro" id="IPR039418">
    <property type="entry name" value="LexA-like"/>
</dbReference>
<dbReference type="InterPro" id="IPR036286">
    <property type="entry name" value="LexA/Signal_pep-like_sf"/>
</dbReference>
<dbReference type="InterPro" id="IPR006199">
    <property type="entry name" value="LexA_DNA-bd_dom"/>
</dbReference>
<dbReference type="InterPro" id="IPR050077">
    <property type="entry name" value="LexA_repressor"/>
</dbReference>
<dbReference type="InterPro" id="IPR006197">
    <property type="entry name" value="Peptidase_S24_LexA"/>
</dbReference>
<dbReference type="InterPro" id="IPR015927">
    <property type="entry name" value="Peptidase_S24_S26A/B/C"/>
</dbReference>
<dbReference type="InterPro" id="IPR036388">
    <property type="entry name" value="WH-like_DNA-bd_sf"/>
</dbReference>
<dbReference type="InterPro" id="IPR036390">
    <property type="entry name" value="WH_DNA-bd_sf"/>
</dbReference>
<dbReference type="NCBIfam" id="TIGR00498">
    <property type="entry name" value="lexA"/>
    <property type="match status" value="1"/>
</dbReference>
<dbReference type="PANTHER" id="PTHR33516">
    <property type="entry name" value="LEXA REPRESSOR"/>
    <property type="match status" value="1"/>
</dbReference>
<dbReference type="PANTHER" id="PTHR33516:SF2">
    <property type="entry name" value="LEXA REPRESSOR-RELATED"/>
    <property type="match status" value="1"/>
</dbReference>
<dbReference type="Pfam" id="PF01726">
    <property type="entry name" value="LexA_DNA_bind"/>
    <property type="match status" value="1"/>
</dbReference>
<dbReference type="Pfam" id="PF00717">
    <property type="entry name" value="Peptidase_S24"/>
    <property type="match status" value="1"/>
</dbReference>
<dbReference type="PRINTS" id="PR00726">
    <property type="entry name" value="LEXASERPTASE"/>
</dbReference>
<dbReference type="SUPFAM" id="SSF51306">
    <property type="entry name" value="LexA/Signal peptidase"/>
    <property type="match status" value="1"/>
</dbReference>
<dbReference type="SUPFAM" id="SSF46785">
    <property type="entry name" value="Winged helix' DNA-binding domain"/>
    <property type="match status" value="1"/>
</dbReference>
<accession>B0SFV4</accession>
<keyword id="KW-0068">Autocatalytic cleavage</keyword>
<keyword id="KW-0227">DNA damage</keyword>
<keyword id="KW-0234">DNA repair</keyword>
<keyword id="KW-0235">DNA replication</keyword>
<keyword id="KW-0238">DNA-binding</keyword>
<keyword id="KW-0378">Hydrolase</keyword>
<keyword id="KW-0678">Repressor</keyword>
<keyword id="KW-0742">SOS response</keyword>
<keyword id="KW-0804">Transcription</keyword>
<keyword id="KW-0805">Transcription regulation</keyword>
<proteinExistence type="inferred from homology"/>
<organism>
    <name type="scientific">Leptospira biflexa serovar Patoc (strain Patoc 1 / Ames)</name>
    <dbReference type="NCBI Taxonomy" id="355278"/>
    <lineage>
        <taxon>Bacteria</taxon>
        <taxon>Pseudomonadati</taxon>
        <taxon>Spirochaetota</taxon>
        <taxon>Spirochaetia</taxon>
        <taxon>Leptospirales</taxon>
        <taxon>Leptospiraceae</taxon>
        <taxon>Leptospira</taxon>
    </lineage>
</organism>
<comment type="function">
    <text evidence="1">Represses a number of genes involved in the response to DNA damage (SOS response), including recA and lexA. In the presence of single-stranded DNA, RecA interacts with LexA causing an autocatalytic cleavage which disrupts the DNA-binding part of LexA, leading to derepression of the SOS regulon and eventually DNA repair.</text>
</comment>
<comment type="catalytic activity">
    <reaction evidence="1">
        <text>Hydrolysis of Ala-|-Gly bond in repressor LexA.</text>
        <dbReference type="EC" id="3.4.21.88"/>
    </reaction>
</comment>
<comment type="subunit">
    <text evidence="1">Homodimer.</text>
</comment>
<comment type="similarity">
    <text evidence="1">Belongs to the peptidase S24 family.</text>
</comment>
<name>LEXA_LEPBA</name>